<proteinExistence type="evidence at protein level"/>
<protein>
    <recommendedName>
        <fullName>Genome polyprotein</fullName>
    </recommendedName>
    <component>
        <recommendedName>
            <fullName>Putative leader protein</fullName>
        </recommendedName>
    </component>
    <component>
        <recommendedName>
            <fullName>Capsid protein 1</fullName>
            <shortName>CP-1</shortName>
        </recommendedName>
        <alternativeName>
            <fullName>22.5 kDa protein</fullName>
        </alternativeName>
        <alternativeName>
            <fullName>Coat protein 1</fullName>
        </alternativeName>
    </component>
    <component>
        <recommendedName>
            <fullName>Capsid protein 2</fullName>
            <shortName>CP-2</shortName>
        </recommendedName>
        <alternativeName>
            <fullName>26 kDa protein</fullName>
        </alternativeName>
        <alternativeName>
            <fullName>Coat protein 2</fullName>
        </alternativeName>
    </component>
    <component>
        <recommendedName>
            <fullName>Capsid protein 3</fullName>
            <shortName>CP-3</shortName>
        </recommendedName>
        <alternativeName>
            <fullName>31 kDa protein</fullName>
        </alternativeName>
        <alternativeName>
            <fullName>Coat protein 3</fullName>
        </alternativeName>
    </component>
    <component>
        <recommendedName>
            <fullName>Putative helicase</fullName>
            <ecNumber>3.6.4.-</ecNumber>
        </recommendedName>
        <alternativeName>
            <fullName>Putative NTP-binding protein</fullName>
        </alternativeName>
    </component>
    <component>
        <recommendedName>
            <fullName>Probable picornain 3C-like protease</fullName>
            <shortName>3C-like protease</shortName>
            <ecNumber>3.4.22.-</ecNumber>
        </recommendedName>
    </component>
    <component>
        <recommendedName>
            <fullName>Probable RNA-directed RNA polymerase</fullName>
            <ecNumber>2.7.7.48</ecNumber>
        </recommendedName>
    </component>
</protein>
<organismHost>
    <name type="scientific">Oryza sativa</name>
    <name type="common">Rice</name>
    <dbReference type="NCBI Taxonomy" id="4530"/>
</organismHost>
<dbReference type="EC" id="3.6.4.-"/>
<dbReference type="EC" id="3.4.22.-"/>
<dbReference type="EC" id="2.7.7.48"/>
<dbReference type="EMBL" id="AB064963">
    <property type="protein sequence ID" value="BAB61927.1"/>
    <property type="molecule type" value="Genomic_RNA"/>
</dbReference>
<dbReference type="SMR" id="Q91PP5"/>
<dbReference type="MEROPS" id="C03.024"/>
<dbReference type="Proteomes" id="UP000007184">
    <property type="component" value="Genome"/>
</dbReference>
<dbReference type="GO" id="GO:0033644">
    <property type="term" value="C:host cell membrane"/>
    <property type="evidence" value="ECO:0007669"/>
    <property type="project" value="UniProtKB-SubCell"/>
</dbReference>
<dbReference type="GO" id="GO:0016020">
    <property type="term" value="C:membrane"/>
    <property type="evidence" value="ECO:0007669"/>
    <property type="project" value="UniProtKB-KW"/>
</dbReference>
<dbReference type="GO" id="GO:0019028">
    <property type="term" value="C:viral capsid"/>
    <property type="evidence" value="ECO:0007669"/>
    <property type="project" value="UniProtKB-KW"/>
</dbReference>
<dbReference type="GO" id="GO:0005524">
    <property type="term" value="F:ATP binding"/>
    <property type="evidence" value="ECO:0007669"/>
    <property type="project" value="UniProtKB-KW"/>
</dbReference>
<dbReference type="GO" id="GO:0004197">
    <property type="term" value="F:cysteine-type endopeptidase activity"/>
    <property type="evidence" value="ECO:0007669"/>
    <property type="project" value="InterPro"/>
</dbReference>
<dbReference type="GO" id="GO:0003723">
    <property type="term" value="F:RNA binding"/>
    <property type="evidence" value="ECO:0007669"/>
    <property type="project" value="InterPro"/>
</dbReference>
<dbReference type="GO" id="GO:0003724">
    <property type="term" value="F:RNA helicase activity"/>
    <property type="evidence" value="ECO:0007669"/>
    <property type="project" value="InterPro"/>
</dbReference>
<dbReference type="GO" id="GO:0003968">
    <property type="term" value="F:RNA-directed RNA polymerase activity"/>
    <property type="evidence" value="ECO:0007669"/>
    <property type="project" value="UniProtKB-KW"/>
</dbReference>
<dbReference type="GO" id="GO:0005198">
    <property type="term" value="F:structural molecule activity"/>
    <property type="evidence" value="ECO:0007669"/>
    <property type="project" value="InterPro"/>
</dbReference>
<dbReference type="GO" id="GO:0006351">
    <property type="term" value="P:DNA-templated transcription"/>
    <property type="evidence" value="ECO:0007669"/>
    <property type="project" value="InterPro"/>
</dbReference>
<dbReference type="GO" id="GO:0006508">
    <property type="term" value="P:proteolysis"/>
    <property type="evidence" value="ECO:0007669"/>
    <property type="project" value="UniProtKB-KW"/>
</dbReference>
<dbReference type="GO" id="GO:0039694">
    <property type="term" value="P:viral RNA genome replication"/>
    <property type="evidence" value="ECO:0007669"/>
    <property type="project" value="InterPro"/>
</dbReference>
<dbReference type="CDD" id="cd23169">
    <property type="entry name" value="ps-ssRNAv-Picornavirales"/>
    <property type="match status" value="1"/>
</dbReference>
<dbReference type="CDD" id="cd00205">
    <property type="entry name" value="rhv_like"/>
    <property type="match status" value="1"/>
</dbReference>
<dbReference type="Gene3D" id="1.20.960.20">
    <property type="match status" value="1"/>
</dbReference>
<dbReference type="Gene3D" id="2.60.120.20">
    <property type="match status" value="3"/>
</dbReference>
<dbReference type="Gene3D" id="3.30.70.270">
    <property type="match status" value="1"/>
</dbReference>
<dbReference type="Gene3D" id="2.40.10.10">
    <property type="entry name" value="Trypsin-like serine proteases"/>
    <property type="match status" value="1"/>
</dbReference>
<dbReference type="InterPro" id="IPR043502">
    <property type="entry name" value="DNA/RNA_pol_sf"/>
</dbReference>
<dbReference type="InterPro" id="IPR000605">
    <property type="entry name" value="Helicase_SF3_ssDNA/RNA_vir"/>
</dbReference>
<dbReference type="InterPro" id="IPR014759">
    <property type="entry name" value="Helicase_SF3_ssRNA_vir"/>
</dbReference>
<dbReference type="InterPro" id="IPR044067">
    <property type="entry name" value="PCV_3C_PRO"/>
</dbReference>
<dbReference type="InterPro" id="IPR024387">
    <property type="entry name" value="Pept_C3G_Picornavir"/>
</dbReference>
<dbReference type="InterPro" id="IPR009003">
    <property type="entry name" value="Peptidase_S1_PA"/>
</dbReference>
<dbReference type="InterPro" id="IPR043504">
    <property type="entry name" value="Peptidase_S1_PA_chymotrypsin"/>
</dbReference>
<dbReference type="InterPro" id="IPR001676">
    <property type="entry name" value="Picornavirus_capsid"/>
</dbReference>
<dbReference type="InterPro" id="IPR043128">
    <property type="entry name" value="Rev_trsase/Diguanyl_cyclase"/>
</dbReference>
<dbReference type="InterPro" id="IPR033703">
    <property type="entry name" value="Rhv-like"/>
</dbReference>
<dbReference type="InterPro" id="IPR001205">
    <property type="entry name" value="RNA-dir_pol_C"/>
</dbReference>
<dbReference type="InterPro" id="IPR007094">
    <property type="entry name" value="RNA-dir_pol_PSvirus"/>
</dbReference>
<dbReference type="InterPro" id="IPR029053">
    <property type="entry name" value="Viral_coat"/>
</dbReference>
<dbReference type="InterPro" id="IPR024379">
    <property type="entry name" value="Waikavirus_capsid-1"/>
</dbReference>
<dbReference type="Pfam" id="PF12381">
    <property type="entry name" value="Peptidase_C3G"/>
    <property type="match status" value="1"/>
</dbReference>
<dbReference type="Pfam" id="PF00680">
    <property type="entry name" value="RdRP_1"/>
    <property type="match status" value="1"/>
</dbReference>
<dbReference type="Pfam" id="PF00073">
    <property type="entry name" value="Rhv"/>
    <property type="match status" value="1"/>
</dbReference>
<dbReference type="Pfam" id="PF00910">
    <property type="entry name" value="RNA_helicase"/>
    <property type="match status" value="1"/>
</dbReference>
<dbReference type="Pfam" id="PF12264">
    <property type="entry name" value="Waikav_capsid_1"/>
    <property type="match status" value="1"/>
</dbReference>
<dbReference type="SUPFAM" id="SSF56672">
    <property type="entry name" value="DNA/RNA polymerases"/>
    <property type="match status" value="1"/>
</dbReference>
<dbReference type="SUPFAM" id="SSF88633">
    <property type="entry name" value="Positive stranded ssRNA viruses"/>
    <property type="match status" value="2"/>
</dbReference>
<dbReference type="SUPFAM" id="SSF50494">
    <property type="entry name" value="Trypsin-like serine proteases"/>
    <property type="match status" value="1"/>
</dbReference>
<dbReference type="PROSITE" id="PS51874">
    <property type="entry name" value="PCV_3C_PRO"/>
    <property type="match status" value="1"/>
</dbReference>
<dbReference type="PROSITE" id="PS50507">
    <property type="entry name" value="RDRP_SSRNA_POS"/>
    <property type="match status" value="1"/>
</dbReference>
<dbReference type="PROSITE" id="PS51218">
    <property type="entry name" value="SF3_HELICASE_2"/>
    <property type="match status" value="1"/>
</dbReference>
<accession>Q91PP5</accession>
<reference key="1">
    <citation type="journal article" date="2000" name="Virus Genes">
        <title>Complete nucleotide sequence of the rice tungro spherical virus genome of the highly virulent strain Vt6.</title>
        <authorList>
            <person name="Isogai M."/>
            <person name="Cabauatan P.Q."/>
            <person name="Masuta C."/>
            <person name="Uyeda I."/>
            <person name="Azzam O."/>
        </authorList>
    </citation>
    <scope>NUCLEOTIDE SEQUENCE [GENOMIC RNA]</scope>
</reference>
<reference key="2">
    <citation type="journal article" date="2005" name="Arch. Virol.">
        <title>3C-like protease encoded by Rice tungro spherical virus is autocatalytically processed.</title>
        <authorList>
            <person name="Sekiguchi H."/>
            <person name="Isogai M."/>
            <person name="Masuta C."/>
            <person name="Uyeda I."/>
        </authorList>
    </citation>
    <scope>PROTEOLYTIC PROCESSING OF PICORNAIN 3C-LIKE PROTEASE</scope>
    <scope>MUTAGENESIS OF CYS-2763</scope>
</reference>
<name>POLG_RTSVT</name>
<feature type="chain" id="PRO_0000041147" description="Putative leader protein" evidence="2">
    <location>
        <begin position="1"/>
        <end position="641"/>
    </location>
</feature>
<feature type="chain" id="PRO_0000041148" description="Capsid protein 1" evidence="1">
    <location>
        <begin position="642"/>
        <end position="849"/>
    </location>
</feature>
<feature type="chain" id="PRO_0000041149" description="Capsid protein 2" evidence="1">
    <location>
        <begin position="850"/>
        <end position="1052"/>
    </location>
</feature>
<feature type="chain" id="PRO_0000041150" description="Capsid protein 3" evidence="1">
    <location>
        <begin position="1053"/>
        <end position="1367" status="uncertain"/>
    </location>
</feature>
<feature type="chain" id="PRO_0000041151" description="Putative helicase" evidence="2">
    <location>
        <begin position="1368" status="uncertain"/>
        <end position="2523"/>
    </location>
</feature>
<feature type="chain" id="PRO_0000041152" description="Probable picornain 3C-like protease" evidence="1">
    <location>
        <begin position="2524"/>
        <end position="2849" status="uncertain"/>
    </location>
</feature>
<feature type="chain" id="PRO_0000041153" description="Probable RNA-directed RNA polymerase" evidence="1">
    <location>
        <begin position="2850" status="uncertain"/>
        <end position="3471"/>
    </location>
</feature>
<feature type="transmembrane region" description="Helical" evidence="2">
    <location>
        <begin position="1493"/>
        <end position="1513"/>
    </location>
</feature>
<feature type="transmembrane region" description="Helical" evidence="2">
    <location>
        <begin position="1592"/>
        <end position="1612"/>
    </location>
</feature>
<feature type="transmembrane region" description="Helical" evidence="2">
    <location>
        <begin position="2360"/>
        <end position="2380"/>
    </location>
</feature>
<feature type="domain" description="SF3 helicase" evidence="4">
    <location>
        <begin position="1748"/>
        <end position="1914"/>
    </location>
</feature>
<feature type="domain" description="Peptidase C3" evidence="5">
    <location>
        <begin position="2629"/>
        <end position="2847"/>
    </location>
</feature>
<feature type="domain" description="RdRp catalytic" evidence="3">
    <location>
        <begin position="3152"/>
        <end position="3283"/>
    </location>
</feature>
<feature type="region of interest" description="Disordered" evidence="6">
    <location>
        <begin position="603"/>
        <end position="639"/>
    </location>
</feature>
<feature type="region of interest" description="Disordered" evidence="6">
    <location>
        <begin position="1271"/>
        <end position="1307"/>
    </location>
</feature>
<feature type="region of interest" description="Disordered" evidence="6">
    <location>
        <begin position="2391"/>
        <end position="2411"/>
    </location>
</feature>
<feature type="region of interest" description="Disordered" evidence="6">
    <location>
        <begin position="2435"/>
        <end position="2460"/>
    </location>
</feature>
<feature type="coiled-coil region" evidence="2">
    <location>
        <begin position="513"/>
        <end position="603"/>
    </location>
</feature>
<feature type="compositionally biased region" description="Polar residues" evidence="6">
    <location>
        <begin position="606"/>
        <end position="621"/>
    </location>
</feature>
<feature type="compositionally biased region" description="Polar residues" evidence="6">
    <location>
        <begin position="1271"/>
        <end position="1291"/>
    </location>
</feature>
<feature type="compositionally biased region" description="Acidic residues" evidence="6">
    <location>
        <begin position="2391"/>
        <end position="2401"/>
    </location>
</feature>
<feature type="compositionally biased region" description="Basic and acidic residues" evidence="6">
    <location>
        <begin position="2435"/>
        <end position="2448"/>
    </location>
</feature>
<feature type="active site" description="For picornain 3C-like protease activity" evidence="5">
    <location>
        <position position="2677"/>
    </location>
</feature>
<feature type="active site" description="For picornain 3C-like protease activity" evidence="5">
    <location>
        <position position="2714"/>
    </location>
</feature>
<feature type="active site" description="For picornain 3C-like protease activity" evidence="5">
    <location>
        <position position="2808"/>
    </location>
</feature>
<feature type="binding site" evidence="4">
    <location>
        <begin position="1774"/>
        <end position="1781"/>
    </location>
    <ligand>
        <name>ATP</name>
        <dbReference type="ChEBI" id="CHEBI:30616"/>
    </ligand>
</feature>
<feature type="site" description="Cleavage" evidence="1">
    <location>
        <begin position="641"/>
        <end position="642"/>
    </location>
</feature>
<feature type="site" description="Cleavage" evidence="1">
    <location>
        <begin position="849"/>
        <end position="850"/>
    </location>
</feature>
<feature type="site" description="Cleavage" evidence="1">
    <location>
        <begin position="1052"/>
        <end position="1053"/>
    </location>
</feature>
<feature type="site" description="Cleavage" evidence="1">
    <location>
        <begin position="2523"/>
        <end position="2524"/>
    </location>
</feature>
<feature type="mutagenesis site" description="Complete loss of cleavage between 3C-like protease and RNA-directed RNA polymerase." evidence="7">
    <original>C</original>
    <variation>W</variation>
    <location>
        <position position="2763"/>
    </location>
</feature>
<comment type="function">
    <text evidence="1">Picornain 3C-like protease is a thiol protease that probably cleaves the polyprotein.</text>
</comment>
<comment type="catalytic activity">
    <reaction evidence="3">
        <text>RNA(n) + a ribonucleoside 5'-triphosphate = RNA(n+1) + diphosphate</text>
        <dbReference type="Rhea" id="RHEA:21248"/>
        <dbReference type="Rhea" id="RHEA-COMP:14527"/>
        <dbReference type="Rhea" id="RHEA-COMP:17342"/>
        <dbReference type="ChEBI" id="CHEBI:33019"/>
        <dbReference type="ChEBI" id="CHEBI:61557"/>
        <dbReference type="ChEBI" id="CHEBI:140395"/>
        <dbReference type="EC" id="2.7.7.48"/>
    </reaction>
</comment>
<comment type="subcellular location">
    <molecule>Capsid protein 1</molecule>
    <subcellularLocation>
        <location evidence="8">Virion</location>
    </subcellularLocation>
</comment>
<comment type="subcellular location">
    <molecule>Capsid protein 2</molecule>
    <subcellularLocation>
        <location evidence="8">Virion</location>
    </subcellularLocation>
</comment>
<comment type="subcellular location">
    <molecule>Capsid protein 3</molecule>
    <subcellularLocation>
        <location evidence="8">Virion</location>
    </subcellularLocation>
</comment>
<comment type="subcellular location">
    <molecule>Putative helicase</molecule>
    <subcellularLocation>
        <location evidence="8">Host membrane</location>
        <topology evidence="8">Multi-pass membrane protein</topology>
    </subcellularLocation>
</comment>
<comment type="PTM">
    <text evidence="1 7">Specific enzymatic cleavages by picornain 3C-like protease in vivo yield mature proteins (By similarity). Picornain 3C-like protease is autocatalytically processed.</text>
</comment>
<comment type="miscellaneous">
    <text>The Vt6 strain is a highly virulent strain.</text>
</comment>
<keyword id="KW-0067">ATP-binding</keyword>
<keyword id="KW-0167">Capsid protein</keyword>
<keyword id="KW-0175">Coiled coil</keyword>
<keyword id="KW-0347">Helicase</keyword>
<keyword id="KW-1043">Host membrane</keyword>
<keyword id="KW-0378">Hydrolase</keyword>
<keyword id="KW-0472">Membrane</keyword>
<keyword id="KW-0547">Nucleotide-binding</keyword>
<keyword id="KW-0548">Nucleotidyltransferase</keyword>
<keyword id="KW-0645">Protease</keyword>
<keyword id="KW-0696">RNA-directed RNA polymerase</keyword>
<keyword id="KW-0788">Thiol protease</keyword>
<keyword id="KW-0808">Transferase</keyword>
<keyword id="KW-0812">Transmembrane</keyword>
<keyword id="KW-1133">Transmembrane helix</keyword>
<keyword id="KW-0693">Viral RNA replication</keyword>
<keyword id="KW-0946">Virion</keyword>
<evidence type="ECO:0000250" key="1"/>
<evidence type="ECO:0000255" key="2"/>
<evidence type="ECO:0000255" key="3">
    <source>
        <dbReference type="PROSITE-ProRule" id="PRU00539"/>
    </source>
</evidence>
<evidence type="ECO:0000255" key="4">
    <source>
        <dbReference type="PROSITE-ProRule" id="PRU00551"/>
    </source>
</evidence>
<evidence type="ECO:0000255" key="5">
    <source>
        <dbReference type="PROSITE-ProRule" id="PRU01222"/>
    </source>
</evidence>
<evidence type="ECO:0000256" key="6">
    <source>
        <dbReference type="SAM" id="MobiDB-lite"/>
    </source>
</evidence>
<evidence type="ECO:0000269" key="7">
    <source>
    </source>
</evidence>
<evidence type="ECO:0000305" key="8"/>
<sequence>MQSFLLSSKNQAKLLHAGLEFVGGVRCAHQGWVSGKAVVFCNYCNFAHRLYRFYTKNHCVLNKETIENLCGRSFVSLYRAGLLLDDFTIDDLLGKGKYAKGSIDNLSIPFDDCALCPNAGTRLSQTGVSHDHFVCNYVEHLFECASFSRETGGKFIRACSKGWHWNATCTTCGASCRFANPRENVVIAIFMNFLRVMYDGNKYYVSLHCDTEWIPVHPLFARLVLMVRGFAPLDNSHVIEEDEMDICGHPSEVTYDDPSNYAFSHQHVTRGVGMGHLAFCRDANGVDRGEHKFYLHGPFDLKMTHAMFRVFMILLNCHGYVQSEFREEHPAVKDRSLCALLSVAGLRGVNIACNEEFIHLHSQFHNGSFRSQRPIPMVYAEPEMYPPLEYVRLTESWVPRGRVMIDDLPSLLSRVYAESSQPHAGEIYEEIFDEDDLFELGDDEGTSTRGLLDLGRRLGGLLLGATKCVKGLHAVIEWPVDVLTKEAEDLGTWLADNKKYVSESTWSCQVCPEVQDALEKSMREQAKLNAQVIGGIKKLATTMDSATSKLKDSLKELERRISVLEQGVDETQQARITNLENFCEDAAKAFDALRADIDALKKKPAQSVTPLPSPSGNSGTAGEQRPPPRRRPPVVEMSEAQAGETVIVGGDEEQEAHQDSSVAAAGPTDEHNAMLQKIYLGSFKWKVSDGGGSILKTFSLPSDIWAANDRMKNFLSYFQYYTCEGMTFTLTITSIGLHGGTLLVAWDALSSATRRGIVSMIQLSNLPSMTLHASGSSIGTLTVTSPAIQHQICTSGSEGSIANLGSLVISVANVLCADSASAQELNVNAWVQFDKPKLSYWTAQHTIAQSGGFEESQDLGDLQAIIATGKWSTTSDKNLMEIIVHPTACYVSEKLIYQTNLSVVAHMFAKWSGSMKYTFVFGASMFDRGKIMVSAVPVQFRNSKLTLSQMAAFPSMVCDLSVETREFTFEVPYISIGKMSLVCKDYLFDISSYNADLVVSRLHVMILDPLVKTGNASNSIGFYVVAGPGKDFKLHQMCGVKSQFAHDVLTAQDFGRSLSCSRLLGNGFKEWCSRESLLMRIPLKNGKKRAFKYAVTPRMRTLPPEATSLSWLSQIFVEWRGSLTYTIHVQSGSAIQHSYMRIWYDPNGKTDEKEIKFLDSAHPPAGIKVYHWDLKIGDSFRFTVPYCARTEKLQIPKAYASTPYEWLTMYNGAVTIDLRSGADMELFVSIAGGDDFEMFEQTVPPKCGSVSDSYTVLSYADDIKSVTEVPNKTTYLADEQPTTSAPRTSTVDTEEDPPTEGEIARTSNGTLVQYRGGAWKPMVERTPTMSKKQVGPELVASDSHMYKCIKNMNKNVKILTDRQCTAKLADIVDSTQGLVGSNSTFVEDLAVGAKQIRKFGESLEVFEGSMSAAKTAELIDNTHAAFSGPADGSPISNVVQLLLPMLSSIKGMSGKMESKMASLTAMFQPCKKAITHLIERSFPYLACKGFKTDKWIWAALASILVGAALLHYYRSDLKFVKKWSVMCMIIWAPLLAEKAYHLGTWIKEKFLKSLPRTRTIKDSCRKHSLAGAFECLASASCAYIKDNWAKTMSSLLTILSVVASLVMWGKIPDDKEITSFADKFHSIGKKGRSITNIIGGFEKITSVCKKWSETLVGWIVSNVSGGIPKEDLAMTAYLGFKIHDWVRETRDMALMENRFQGFGGDEHLVRVRRLYGHSLKIDNALMEKQIVPDMQLSLIIKECRQKCLELMNESYTYKGMKQSRIDPLHVCMLGAPGVGKSTIAHVVINNLLDHRGEPEVDRIYTRCCADAYWSNYHQEPVILYDDLGAIKSNLRLSDYAEIMGIKTNDPFSVPMAAVEDKGKHCTSKYVFSCTNVLNLDDTGDVVTKMAYYRRRNVLVKVERDPDVPKNEANPTEGLVFTVLGHDQNCQGDPQFVVKENWDEPFLREVDTEGWRFERVEYRTFLRFLCMYTDAYMYSQEQVLQGIKTFKMNPFAPEPEFAQAQSGEAAECEIVEETQEIPGEAPQEVKELAKIETAPNMDELVEAFNKLRVTPGHLNEILRDGSGCYIDEWAIAGPRWLSFHELLPFTCGCHHTRVCDFNIVYNNMCKAVRSQSVHFKYRANQAIKYAYTHKLHSQCRYSIDFEKLRECNPLDVFVCVLSKYTADDHSFERRCPKKMNVVRMQRPPVFELKMRPPSDSVVVEDDQGQRAFEWPHLYTFLRYRAIEFKDDKGSLTVREDASADVCPWNEFLKLPWLDGDQLKSVLPAHLHRMVQARLEQVEIMEENGNYSGEMRNAIAEIKEYLDQDHQWVAALVLVACAVKERRKMTHDKLHRKSFNALDRLDKWYTTTAPKTSKKMKILLAIGASVAVAGVAVGAVILLQKTNLFGSKEDEEIEGEEGETQASGAHESDGIVTQHLKRDIRPKMRVTYTDHHVAEAHEEKSTEKPRKPGNPTRKNFLGLSPGFAERGMGVTYEEHTPLKDALLDESNKVFRRKIVASVESAVKQGGKASKDSVLSQISEWQDKVRATGVIAARQLEASGSLKKIHNLNSRRTSSHVMPGLVVHDGTFERSDEVDAELHRITIDEVKSCPKMIKEGVSTLSVKKASVGVLALQKAESQLSFPFTSRAGVDRDLSMTNLIDTHMAGMSCIIISELGNVFRTFGVLRLCGTYVCMPAHYLDEITSEHTLYFVCPSKITQIQLERHRVCLVNGFQETVVWDLGPSVPPSRNYIDFTAKADDWKNYKATSGALVMSKYLVDSMLQCVHFLDSIELTEANVSVPTSYYEANGGIHTIISGLRYRVHCMPGFCGAAIMRADATCYRKIIGMHVSGLRNKCMGYAETLTQEHLMRAIETLKETGLLKHIPRGAIGAGEEKLPEHSKKQSLSLEGKGNLGIVGQLPAQLVPTSVTKTTICKSMIHGLIGEIKTEPSVLSAWDRRLPFPPGEWDPMKDAVKKYGSYILPFPTEEIQEVENFLIKKFRRKENSRRTRNVNSLEVGINGIDGSDFWSPIEMKTSPGYPYILKRPSGAQGKKYLFEELEPYPSGRPKYAMKDPELIENYERIKEEVTSGVKPSIMTMECLKDERRKLAKIYEKPATRTFTILSPEVNILFRQYFGDFAAMVMSTRREHFSQVGINPESMEWSDLINSLLRVNTKGFAGDYSKFDGIGSPAIYHSIVNVVNAWYDDGEVNARARHSLISSIVHRDGICGDLILRYSQGMPSGFAMTVIFNSFVNYYFMALAWMSTVGSSLLSPQGSCKDFDTYCKIVAYGDDNVVSVHEEFLDVYNLQTVAAYLSHFGVTYTDGDKNPIHMSKPYEDITKMSFLKRGFERVESSGFLWKAPLDKTSIEERLNWIRDCPTPVEALEQNIESALHEAAIHGRDYFDDLVQRLNSALKRVMLPPTDISFEECQARWWASVTGDALRAADYSSLVRRASSGHVEFNKKYRDMFRQQDLPLKEILMKSKPVALLDLEV</sequence>
<organism>
    <name type="scientific">Rice tungro spherical virus (strain Vt6)</name>
    <name type="common">RTSV</name>
    <name type="synonym">Rice tungro spherical waikavirus</name>
    <dbReference type="NCBI Taxonomy" id="337080"/>
    <lineage>
        <taxon>Viruses</taxon>
        <taxon>Riboviria</taxon>
        <taxon>Orthornavirae</taxon>
        <taxon>Pisuviricota</taxon>
        <taxon>Pisoniviricetes</taxon>
        <taxon>Picornavirales</taxon>
        <taxon>Secoviridae</taxon>
        <taxon>Waikavirus</taxon>
        <taxon>Waikavirus oryzae</taxon>
    </lineage>
</organism>